<feature type="chain" id="PRO_0000210484" description="Uncharacterized protein MG243 homolog">
    <location>
        <begin position="1"/>
        <end position="224"/>
    </location>
</feature>
<feature type="transmembrane region" description="Helical" evidence="1">
    <location>
        <begin position="25"/>
        <end position="45"/>
    </location>
</feature>
<feature type="transmembrane region" description="Helical" evidence="1">
    <location>
        <begin position="56"/>
        <end position="76"/>
    </location>
</feature>
<feature type="transmembrane region" description="Helical" evidence="1">
    <location>
        <begin position="107"/>
        <end position="127"/>
    </location>
</feature>
<feature type="transmembrane region" description="Helical" evidence="1">
    <location>
        <begin position="149"/>
        <end position="169"/>
    </location>
</feature>
<name>Y339_MYCPN</name>
<keyword id="KW-1003">Cell membrane</keyword>
<keyword id="KW-0472">Membrane</keyword>
<keyword id="KW-1185">Reference proteome</keyword>
<keyword id="KW-0812">Transmembrane</keyword>
<keyword id="KW-1133">Transmembrane helix</keyword>
<evidence type="ECO:0000255" key="1"/>
<evidence type="ECO:0000305" key="2"/>
<comment type="subcellular location">
    <subcellularLocation>
        <location evidence="2">Cell membrane</location>
        <topology evidence="2">Multi-pass membrane protein</topology>
    </subcellularLocation>
</comment>
<gene>
    <name type="ordered locus">MPN_339</name>
    <name type="ORF">H91_orf224</name>
    <name type="ORF">MP497</name>
</gene>
<organism>
    <name type="scientific">Mycoplasma pneumoniae (strain ATCC 29342 / M129 / Subtype 1)</name>
    <name type="common">Mycoplasmoides pneumoniae</name>
    <dbReference type="NCBI Taxonomy" id="272634"/>
    <lineage>
        <taxon>Bacteria</taxon>
        <taxon>Bacillati</taxon>
        <taxon>Mycoplasmatota</taxon>
        <taxon>Mycoplasmoidales</taxon>
        <taxon>Mycoplasmoidaceae</taxon>
        <taxon>Mycoplasmoides</taxon>
    </lineage>
</organism>
<reference key="1">
    <citation type="journal article" date="1996" name="Nucleic Acids Res.">
        <title>Complete sequence analysis of the genome of the bacterium Mycoplasma pneumoniae.</title>
        <authorList>
            <person name="Himmelreich R."/>
            <person name="Hilbert H."/>
            <person name="Plagens H."/>
            <person name="Pirkl E."/>
            <person name="Li B.-C."/>
            <person name="Herrmann R."/>
        </authorList>
    </citation>
    <scope>NUCLEOTIDE SEQUENCE [LARGE SCALE GENOMIC DNA]</scope>
    <source>
        <strain>ATCC 29342 / M129 / Subtype 1</strain>
    </source>
</reference>
<sequence length="224" mass="25613">MQVKVIDENSNTTAVLNCAKAKTRALAWLCDTVLLAILLAIIYGISSIFIKEQSSVFLIMTVSQAVLWLTYFVILPGLWKGKTLFRALLGLSLLIFKKRFWNLLVHELFLWVWYSVIFLALAIYFFVNRDDPKILQAFFDNQNSNLSWIFVKILLSVISVLQLVFVVYFCFSSQKQALQDLLSKSFMVQKAIKVKDCKSELKSTNTIKTHSDLPGDIDLEQLGD</sequence>
<dbReference type="EMBL" id="U00089">
    <property type="protein sequence ID" value="AAB96145.1"/>
    <property type="molecule type" value="Genomic_DNA"/>
</dbReference>
<dbReference type="PIR" id="S73823">
    <property type="entry name" value="S73823"/>
</dbReference>
<dbReference type="RefSeq" id="NP_110027.1">
    <property type="nucleotide sequence ID" value="NC_000912.1"/>
</dbReference>
<dbReference type="RefSeq" id="WP_010874695.1">
    <property type="nucleotide sequence ID" value="NZ_OU342337.1"/>
</dbReference>
<dbReference type="IntAct" id="P75439">
    <property type="interactions" value="1"/>
</dbReference>
<dbReference type="STRING" id="272634.MPN_339"/>
<dbReference type="EnsemblBacteria" id="AAB96145">
    <property type="protein sequence ID" value="AAB96145"/>
    <property type="gene ID" value="MPN_339"/>
</dbReference>
<dbReference type="KEGG" id="mpn:MPN_339"/>
<dbReference type="PATRIC" id="fig|272634.6.peg.363"/>
<dbReference type="HOGENOM" id="CLU_1233907_0_0_14"/>
<dbReference type="OrthoDB" id="392036at2"/>
<dbReference type="BioCyc" id="MPNE272634:G1GJ3-536-MONOMER"/>
<dbReference type="Proteomes" id="UP000000808">
    <property type="component" value="Chromosome"/>
</dbReference>
<dbReference type="GO" id="GO:0005886">
    <property type="term" value="C:plasma membrane"/>
    <property type="evidence" value="ECO:0007669"/>
    <property type="project" value="UniProtKB-SubCell"/>
</dbReference>
<dbReference type="InterPro" id="IPR010432">
    <property type="entry name" value="RDD"/>
</dbReference>
<dbReference type="Pfam" id="PF06271">
    <property type="entry name" value="RDD"/>
    <property type="match status" value="1"/>
</dbReference>
<protein>
    <recommendedName>
        <fullName>Uncharacterized protein MG243 homolog</fullName>
    </recommendedName>
</protein>
<proteinExistence type="predicted"/>
<accession>P75439</accession>